<proteinExistence type="inferred from homology"/>
<organismHost>
    <name type="scientific">Homo sapiens</name>
    <name type="common">Human</name>
    <dbReference type="NCBI Taxonomy" id="9606"/>
</organismHost>
<gene>
    <name type="primary">vpu</name>
</gene>
<evidence type="ECO:0000250" key="1"/>
<evidence type="ECO:0000305" key="2"/>
<organism>
    <name type="scientific">Human immunodeficiency virus type 1 group M subtype A (isolate Z321)</name>
    <name type="common">HIV-1</name>
    <dbReference type="NCBI Taxonomy" id="11692"/>
    <lineage>
        <taxon>Viruses</taxon>
        <taxon>Riboviria</taxon>
        <taxon>Pararnavirae</taxon>
        <taxon>Artverviricota</taxon>
        <taxon>Revtraviricetes</taxon>
        <taxon>Ortervirales</taxon>
        <taxon>Retroviridae</taxon>
        <taxon>Orthoretrovirinae</taxon>
        <taxon>Lentivirus</taxon>
        <taxon>Human immunodeficiency virus type 1</taxon>
    </lineage>
</organism>
<reference key="1">
    <citation type="journal article" date="1989" name="AIDS Res. Hum. Retroviruses">
        <title>Molecular characterization of HIV-1 isolated from a serum collected in 1976: nucleotide sequence comparison to recent isolates and generation of hybrid HIV.</title>
        <authorList>
            <person name="Srinivasan A."/>
            <person name="York D."/>
            <person name="Butler D. Jr."/>
            <person name="Jannoun-Nasr R."/>
            <person name="Getchell J."/>
            <person name="McCormick J."/>
            <person name="Ou C.Y."/>
            <person name="Myers G."/>
            <person name="Smith T."/>
            <person name="Chen E."/>
        </authorList>
    </citation>
    <scope>NUCLEOTIDE SEQUENCE [GENOMIC RNA]</scope>
</reference>
<sequence length="58" mass="6789">TIVFIEYRKIRKEKKIEYLIDRIRERAEDSGNESEGDTGELAKLVEMGDFDPWVGDNL</sequence>
<accession>P08806</accession>
<keyword id="KW-0014">AIDS</keyword>
<keyword id="KW-0053">Apoptosis</keyword>
<keyword id="KW-1043">Host membrane</keyword>
<keyword id="KW-0945">Host-virus interaction</keyword>
<keyword id="KW-0407">Ion channel</keyword>
<keyword id="KW-0406">Ion transport</keyword>
<keyword id="KW-0472">Membrane</keyword>
<keyword id="KW-0597">Phosphoprotein</keyword>
<keyword id="KW-0812">Transmembrane</keyword>
<keyword id="KW-0813">Transport</keyword>
<protein>
    <recommendedName>
        <fullName>Protein Vpu</fullName>
    </recommendedName>
    <alternativeName>
        <fullName>U ORF protein</fullName>
    </alternativeName>
    <alternativeName>
        <fullName>Viral protein U</fullName>
    </alternativeName>
</protein>
<feature type="chain" id="PRO_0000085422" description="Protein Vpu">
    <location>
        <begin position="1" status="less than"/>
        <end position="58"/>
    </location>
</feature>
<feature type="modified residue" description="Phosphoserine; by host CK2" evidence="1">
    <location>
        <position position="30"/>
    </location>
</feature>
<feature type="modified residue" description="Phosphoserine; by host CK2" evidence="1">
    <location>
        <position position="34"/>
    </location>
</feature>
<feature type="non-terminal residue">
    <location>
        <position position="1"/>
    </location>
</feature>
<comment type="function">
    <text evidence="1">Enhances virion budding, by targeting human CD4 and Tetherin/BST2 to proteasome degradation. Degradation of CD4 prevents any unwanted premature interactions between viral Env and its receptor human CD4 in the endoplasmic reticulum. Degradation of antiretroviral protein Tetherin/BST2 is important for virion budding, as BST2 tethers new viral particles to the host cell membrane. Mechanistically, Vpu bridges either CD4 or BST2 to BTRC, a substrate recognition subunit of the Skp1/Cullin/F-box protein E3 ubiquitin ligase, induces their ubiquitination and subsequent proteasomal degradation. The alteration of the E3 ligase specificity by Vpu seems to interfere with the degradation of host IKBKB, leading to NF-kappa-B down-regulation and subsequent apoptosis. Acts as a viroporin that forms an oligomeric ion channel in membranes. Modulates the host DNA repair mechanisms to promote degradation of nuclear viral cDNA in cells that are already productively infected in order to suppress immune sensing and proviral hyper-integration (superinfection). Manipulates PML-NBs and modulates SUMOylation of host BLM protein thereby enhancing its DNA-end processing activity toward viral unintegrated linear DNA. Also inhibits RAD52-mediated homologous repair of viral cDNA, preventing the generation of dead-end circular forms of single copies of the long terminal repeat and permitting sustained nucleolytic attack.</text>
</comment>
<comment type="activity regulation">
    <text evidence="1">Ion channel activity is inhibited by hexamethylene amiloride in vitro.</text>
</comment>
<comment type="subunit">
    <text evidence="1">Homopentamer. Interacts with host CD4 and BRTC; these interactions induce proteasomal degradation of CD4. Interacts with host BST2; this interaction leads to the degradation of host BST2. Interacts with host FBXW11. Interacts with host AP1M1; this interaction plays a role in the mistrafficking and subsequent degradation of host BST2. Interacts with host RANBP2; this interaction allows Vpu to down-regulate host BLM sumoylation.</text>
</comment>
<comment type="subcellular location">
    <subcellularLocation>
        <location evidence="1">Host membrane</location>
        <topology evidence="1">Single-pass type I membrane protein</topology>
    </subcellularLocation>
</comment>
<comment type="domain">
    <text evidence="1">The N-terminus and transmembrane domains are required for self-oligomerization and proper virion budding, whereas the cytoplasmic domain is required for CD4 degradation. The cytoplasmic domain is composed of 2 amphipathic alpha helix that form a U-shape.</text>
</comment>
<comment type="PTM">
    <text evidence="1">Phosphorylated by host CK2. This phosphorylation is necessary for interaction with human BRCP and degradation of CD4 (By similarity).</text>
</comment>
<comment type="miscellaneous">
    <text>HIV-1 lineages are divided in three main groups, M (for Major), O (for Outlier), and N (for New, or Non-M, Non-O). The vast majority of strains found worldwide belong to the group M. Group O seems to be endemic to and largely confined to Cameroon and neighboring countries in West Central Africa, where these viruses represent a small minority of HIV-1 strains. The group N is represented by a limited number of isolates from Cameroonian persons. The group M is further subdivided in 9 clades or subtypes (A to D, F to H, J and K).</text>
</comment>
<comment type="similarity">
    <text evidence="2">Belongs to the HIV-1 VPU protein family.</text>
</comment>
<name>VPU_HV1ZH</name>
<dbReference type="EMBL" id="M15896">
    <property type="protein sequence ID" value="AAB53947.1"/>
    <property type="molecule type" value="Genomic_RNA"/>
</dbReference>
<dbReference type="GO" id="GO:0033644">
    <property type="term" value="C:host cell membrane"/>
    <property type="evidence" value="ECO:0007669"/>
    <property type="project" value="UniProtKB-SubCell"/>
</dbReference>
<dbReference type="GO" id="GO:0016020">
    <property type="term" value="C:membrane"/>
    <property type="evidence" value="ECO:0007669"/>
    <property type="project" value="UniProtKB-KW"/>
</dbReference>
<dbReference type="GO" id="GO:0042609">
    <property type="term" value="F:CD4 receptor binding"/>
    <property type="evidence" value="ECO:0007669"/>
    <property type="project" value="InterPro"/>
</dbReference>
<dbReference type="GO" id="GO:0005261">
    <property type="term" value="F:monoatomic cation channel activity"/>
    <property type="evidence" value="ECO:0007669"/>
    <property type="project" value="InterPro"/>
</dbReference>
<dbReference type="GO" id="GO:0032801">
    <property type="term" value="P:receptor catabolic process"/>
    <property type="evidence" value="ECO:0007669"/>
    <property type="project" value="InterPro"/>
</dbReference>
<dbReference type="GO" id="GO:0019076">
    <property type="term" value="P:viral release from host cell"/>
    <property type="evidence" value="ECO:0007669"/>
    <property type="project" value="InterPro"/>
</dbReference>
<dbReference type="Gene3D" id="1.10.195.10">
    <property type="entry name" value="HIV-1 VPU cytoplasmic domain"/>
    <property type="match status" value="1"/>
</dbReference>
<dbReference type="InterPro" id="IPR008187">
    <property type="entry name" value="Vpu"/>
</dbReference>
<dbReference type="InterPro" id="IPR009032">
    <property type="entry name" value="Vpu_cyt_dom_sf"/>
</dbReference>
<dbReference type="Pfam" id="PF00558">
    <property type="entry name" value="Vpu"/>
    <property type="match status" value="1"/>
</dbReference>
<dbReference type="SUPFAM" id="SSF57647">
    <property type="entry name" value="HIV-1 VPU cytoplasmic domain"/>
    <property type="match status" value="1"/>
</dbReference>